<comment type="function">
    <text>Binds and inhibits integrins alpha-IIb/beta-3 (ITGA2B/ITGB3), alpha-V/beta-3 (ITGAV/ITGB3) and alpha-5/beta-1 (ITGA5/ITGB1).</text>
</comment>
<comment type="subunit">
    <text>Homodimer; disulfide-linked.</text>
</comment>
<comment type="subcellular location">
    <subcellularLocation>
        <location>Secreted</location>
    </subcellularLocation>
</comment>
<comment type="tissue specificity">
    <text>Expressed by the venom gland.</text>
</comment>
<comment type="similarity">
    <text evidence="2">Belongs to the disintegrin family. Dimeric disintegrin subfamily.</text>
</comment>
<evidence type="ECO:0000255" key="1">
    <source>
        <dbReference type="PROSITE-ProRule" id="PRU00068"/>
    </source>
</evidence>
<evidence type="ECO:0000305" key="2"/>
<keyword id="KW-0130">Cell adhesion</keyword>
<keyword id="KW-1217">Cell adhesion impairing toxin</keyword>
<keyword id="KW-0903">Direct protein sequencing</keyword>
<keyword id="KW-1015">Disulfide bond</keyword>
<keyword id="KW-0964">Secreted</keyword>
<keyword id="KW-0800">Toxin</keyword>
<sequence>MNSAHPCCDPVTCKPKRGEHCISGPCCRNCKFLSPGTICKKARGDDMNDYCTGISSDCPRNRYKS</sequence>
<proteinExistence type="evidence at protein level"/>
<feature type="chain" id="PRO_0000045876" description="Disintegrin CC5">
    <location>
        <begin position="1"/>
        <end position="65"/>
    </location>
</feature>
<feature type="chain" id="PRO_0000045877" description="Disintegrin CC5B">
    <location>
        <begin position="2"/>
        <end position="65"/>
    </location>
</feature>
<feature type="domain" description="Disintegrin" evidence="1">
    <location>
        <begin position="1"/>
        <end position="65"/>
    </location>
</feature>
<feature type="short sequence motif" description="Cell attachment site">
    <location>
        <begin position="43"/>
        <end position="45"/>
    </location>
</feature>
<feature type="disulfide bond" evidence="1">
    <location>
        <begin position="7"/>
        <end position="30"/>
    </location>
</feature>
<feature type="disulfide bond" description="Interchain" evidence="1">
    <location>
        <position position="8"/>
    </location>
</feature>
<feature type="disulfide bond" description="Interchain" evidence="1">
    <location>
        <position position="13"/>
    </location>
</feature>
<feature type="disulfide bond" evidence="1">
    <location>
        <begin position="21"/>
        <end position="27"/>
    </location>
</feature>
<feature type="disulfide bond" evidence="1">
    <location>
        <begin position="26"/>
        <end position="51"/>
    </location>
</feature>
<feature type="disulfide bond" evidence="1">
    <location>
        <begin position="39"/>
        <end position="58"/>
    </location>
</feature>
<organism>
    <name type="scientific">Cerastes cerastes</name>
    <name type="common">Horned desert viper</name>
    <dbReference type="NCBI Taxonomy" id="8697"/>
    <lineage>
        <taxon>Eukaryota</taxon>
        <taxon>Metazoa</taxon>
        <taxon>Chordata</taxon>
        <taxon>Craniata</taxon>
        <taxon>Vertebrata</taxon>
        <taxon>Euteleostomi</taxon>
        <taxon>Lepidosauria</taxon>
        <taxon>Squamata</taxon>
        <taxon>Bifurcata</taxon>
        <taxon>Unidentata</taxon>
        <taxon>Episquamata</taxon>
        <taxon>Toxicofera</taxon>
        <taxon>Serpentes</taxon>
        <taxon>Colubroidea</taxon>
        <taxon>Viperidae</taxon>
        <taxon>Viperinae</taxon>
        <taxon>Cerastes</taxon>
    </lineage>
</organism>
<name>DID5_CERCE</name>
<accession>P83041</accession>
<accession>P83042</accession>
<dbReference type="SMR" id="P83041"/>
<dbReference type="GO" id="GO:0005576">
    <property type="term" value="C:extracellular region"/>
    <property type="evidence" value="ECO:0007669"/>
    <property type="project" value="UniProtKB-SubCell"/>
</dbReference>
<dbReference type="GO" id="GO:0090729">
    <property type="term" value="F:toxin activity"/>
    <property type="evidence" value="ECO:0007669"/>
    <property type="project" value="UniProtKB-KW"/>
</dbReference>
<dbReference type="GO" id="GO:0007155">
    <property type="term" value="P:cell adhesion"/>
    <property type="evidence" value="ECO:0007669"/>
    <property type="project" value="UniProtKB-KW"/>
</dbReference>
<dbReference type="Gene3D" id="4.10.70.10">
    <property type="entry name" value="Disintegrin domain"/>
    <property type="match status" value="1"/>
</dbReference>
<dbReference type="InterPro" id="IPR018358">
    <property type="entry name" value="Disintegrin_CS"/>
</dbReference>
<dbReference type="InterPro" id="IPR001762">
    <property type="entry name" value="Disintegrin_dom"/>
</dbReference>
<dbReference type="InterPro" id="IPR036436">
    <property type="entry name" value="Disintegrin_dom_sf"/>
</dbReference>
<dbReference type="PANTHER" id="PTHR11905">
    <property type="entry name" value="ADAM A DISINTEGRIN AND METALLOPROTEASE DOMAIN"/>
    <property type="match status" value="1"/>
</dbReference>
<dbReference type="PANTHER" id="PTHR11905:SF159">
    <property type="entry name" value="ADAM METALLOPROTEASE"/>
    <property type="match status" value="1"/>
</dbReference>
<dbReference type="Pfam" id="PF00200">
    <property type="entry name" value="Disintegrin"/>
    <property type="match status" value="1"/>
</dbReference>
<dbReference type="PRINTS" id="PR00289">
    <property type="entry name" value="DISINTEGRIN"/>
</dbReference>
<dbReference type="SMART" id="SM00050">
    <property type="entry name" value="DISIN"/>
    <property type="match status" value="1"/>
</dbReference>
<dbReference type="SUPFAM" id="SSF57552">
    <property type="entry name" value="Blood coagulation inhibitor (disintegrin)"/>
    <property type="match status" value="1"/>
</dbReference>
<dbReference type="PROSITE" id="PS00427">
    <property type="entry name" value="DISINTEGRIN_1"/>
    <property type="match status" value="1"/>
</dbReference>
<dbReference type="PROSITE" id="PS50214">
    <property type="entry name" value="DISINTEGRIN_2"/>
    <property type="match status" value="1"/>
</dbReference>
<reference key="1">
    <citation type="journal article" date="2002" name="Biochemistry">
        <title>The presence of the WGD motif in CC8 heterodimeric disintegrin increases its inhibitory effect on alphaII(b)beta3, alpha(v)beta3, and alpha5beta1 integrins.</title>
        <authorList>
            <person name="Calvete J.J."/>
            <person name="Fox J.W."/>
            <person name="Agelan A."/>
            <person name="Niewiarowski S."/>
            <person name="Marcinkiewicz C."/>
        </authorList>
    </citation>
    <scope>PROTEIN SEQUENCE</scope>
    <source>
        <tissue>Venom</tissue>
    </source>
</reference>
<protein>
    <recommendedName>
        <fullName>Disintegrin CC5</fullName>
    </recommendedName>
    <component>
        <recommendedName>
            <fullName>Disintegrin CC5B</fullName>
        </recommendedName>
    </component>
</protein>